<reference key="1">
    <citation type="submission" date="2007-05" db="EMBL/GenBank/DDBJ databases">
        <title>Complete sequence of Thermosipho melanesiensis BI429.</title>
        <authorList>
            <consortium name="US DOE Joint Genome Institute"/>
            <person name="Copeland A."/>
            <person name="Lucas S."/>
            <person name="Lapidus A."/>
            <person name="Barry K."/>
            <person name="Glavina del Rio T."/>
            <person name="Dalin E."/>
            <person name="Tice H."/>
            <person name="Pitluck S."/>
            <person name="Chertkov O."/>
            <person name="Brettin T."/>
            <person name="Bruce D."/>
            <person name="Detter J.C."/>
            <person name="Han C."/>
            <person name="Schmutz J."/>
            <person name="Larimer F."/>
            <person name="Land M."/>
            <person name="Hauser L."/>
            <person name="Kyrpides N."/>
            <person name="Mikhailova N."/>
            <person name="Nelson K."/>
            <person name="Gogarten J.P."/>
            <person name="Noll K."/>
            <person name="Richardson P."/>
        </authorList>
    </citation>
    <scope>NUCLEOTIDE SEQUENCE [LARGE SCALE GENOMIC DNA]</scope>
    <source>
        <strain>DSM 12029 / CIP 104789 / BI429</strain>
    </source>
</reference>
<protein>
    <recommendedName>
        <fullName evidence="1">Large ribosomal subunit protein bL34</fullName>
    </recommendedName>
    <alternativeName>
        <fullName evidence="3">50S ribosomal protein L34</fullName>
    </alternativeName>
</protein>
<organism>
    <name type="scientific">Thermosipho melanesiensis (strain DSM 12029 / CIP 104789 / BI429)</name>
    <dbReference type="NCBI Taxonomy" id="391009"/>
    <lineage>
        <taxon>Bacteria</taxon>
        <taxon>Thermotogati</taxon>
        <taxon>Thermotogota</taxon>
        <taxon>Thermotogae</taxon>
        <taxon>Thermotogales</taxon>
        <taxon>Fervidobacteriaceae</taxon>
        <taxon>Thermosipho</taxon>
    </lineage>
</organism>
<gene>
    <name evidence="1" type="primary">rpmH</name>
    <name type="ordered locus">Tmel_1628</name>
</gene>
<dbReference type="EMBL" id="CP000716">
    <property type="protein sequence ID" value="ABR31472.1"/>
    <property type="molecule type" value="Genomic_DNA"/>
</dbReference>
<dbReference type="RefSeq" id="WP_012057831.1">
    <property type="nucleotide sequence ID" value="NC_009616.1"/>
</dbReference>
<dbReference type="SMR" id="A6LNH1"/>
<dbReference type="STRING" id="391009.Tmel_1628"/>
<dbReference type="KEGG" id="tme:Tmel_1628"/>
<dbReference type="eggNOG" id="COG0230">
    <property type="taxonomic scope" value="Bacteria"/>
</dbReference>
<dbReference type="HOGENOM" id="CLU_129938_2_0_0"/>
<dbReference type="Proteomes" id="UP000001110">
    <property type="component" value="Chromosome"/>
</dbReference>
<dbReference type="GO" id="GO:1990904">
    <property type="term" value="C:ribonucleoprotein complex"/>
    <property type="evidence" value="ECO:0007669"/>
    <property type="project" value="UniProtKB-KW"/>
</dbReference>
<dbReference type="GO" id="GO:0005840">
    <property type="term" value="C:ribosome"/>
    <property type="evidence" value="ECO:0007669"/>
    <property type="project" value="UniProtKB-KW"/>
</dbReference>
<dbReference type="GO" id="GO:0003735">
    <property type="term" value="F:structural constituent of ribosome"/>
    <property type="evidence" value="ECO:0007669"/>
    <property type="project" value="InterPro"/>
</dbReference>
<dbReference type="GO" id="GO:0006412">
    <property type="term" value="P:translation"/>
    <property type="evidence" value="ECO:0007669"/>
    <property type="project" value="UniProtKB-UniRule"/>
</dbReference>
<dbReference type="FunFam" id="1.10.287.3980:FF:000001">
    <property type="entry name" value="Mitochondrial ribosomal protein L34"/>
    <property type="match status" value="1"/>
</dbReference>
<dbReference type="Gene3D" id="1.10.287.3980">
    <property type="match status" value="1"/>
</dbReference>
<dbReference type="HAMAP" id="MF_00391">
    <property type="entry name" value="Ribosomal_bL34"/>
    <property type="match status" value="1"/>
</dbReference>
<dbReference type="InterPro" id="IPR000271">
    <property type="entry name" value="Ribosomal_bL34"/>
</dbReference>
<dbReference type="InterPro" id="IPR020939">
    <property type="entry name" value="Ribosomal_bL34_CS"/>
</dbReference>
<dbReference type="NCBIfam" id="TIGR01030">
    <property type="entry name" value="rpmH_bact"/>
    <property type="match status" value="1"/>
</dbReference>
<dbReference type="PANTHER" id="PTHR14503:SF4">
    <property type="entry name" value="LARGE RIBOSOMAL SUBUNIT PROTEIN BL34M"/>
    <property type="match status" value="1"/>
</dbReference>
<dbReference type="PANTHER" id="PTHR14503">
    <property type="entry name" value="MITOCHONDRIAL RIBOSOMAL PROTEIN 34 FAMILY MEMBER"/>
    <property type="match status" value="1"/>
</dbReference>
<dbReference type="Pfam" id="PF00468">
    <property type="entry name" value="Ribosomal_L34"/>
    <property type="match status" value="1"/>
</dbReference>
<dbReference type="PROSITE" id="PS00784">
    <property type="entry name" value="RIBOSOMAL_L34"/>
    <property type="match status" value="1"/>
</dbReference>
<comment type="similarity">
    <text evidence="1">Belongs to the bacterial ribosomal protein bL34 family.</text>
</comment>
<keyword id="KW-0687">Ribonucleoprotein</keyword>
<keyword id="KW-0689">Ribosomal protein</keyword>
<sequence length="44" mass="5437">MKRTYQPSRIKRKRTHGFLARKKTTGGRRVLKNRRRKGRWRLTV</sequence>
<feature type="chain" id="PRO_1000013483" description="Large ribosomal subunit protein bL34">
    <location>
        <begin position="1"/>
        <end position="44"/>
    </location>
</feature>
<feature type="region of interest" description="Disordered" evidence="2">
    <location>
        <begin position="1"/>
        <end position="44"/>
    </location>
</feature>
<accession>A6LNH1</accession>
<proteinExistence type="inferred from homology"/>
<evidence type="ECO:0000255" key="1">
    <source>
        <dbReference type="HAMAP-Rule" id="MF_00391"/>
    </source>
</evidence>
<evidence type="ECO:0000256" key="2">
    <source>
        <dbReference type="SAM" id="MobiDB-lite"/>
    </source>
</evidence>
<evidence type="ECO:0000305" key="3"/>
<name>RL34_THEM4</name>